<name>RL36_NOSP7</name>
<organism>
    <name type="scientific">Nostoc punctiforme (strain ATCC 29133 / PCC 73102)</name>
    <dbReference type="NCBI Taxonomy" id="63737"/>
    <lineage>
        <taxon>Bacteria</taxon>
        <taxon>Bacillati</taxon>
        <taxon>Cyanobacteriota</taxon>
        <taxon>Cyanophyceae</taxon>
        <taxon>Nostocales</taxon>
        <taxon>Nostocaceae</taxon>
        <taxon>Nostoc</taxon>
    </lineage>
</organism>
<evidence type="ECO:0000255" key="1">
    <source>
        <dbReference type="HAMAP-Rule" id="MF_00251"/>
    </source>
</evidence>
<evidence type="ECO:0000305" key="2"/>
<sequence length="37" mass="4295">MKVRASVKKICEKCSVIKRRGRVMVICVNPKHKQRQG</sequence>
<accession>B2ITN4</accession>
<proteinExistence type="inferred from homology"/>
<feature type="chain" id="PRO_1000101050" description="Large ribosomal subunit protein bL36">
    <location>
        <begin position="1"/>
        <end position="37"/>
    </location>
</feature>
<reference key="1">
    <citation type="journal article" date="2013" name="Plant Physiol.">
        <title>A Nostoc punctiforme Sugar Transporter Necessary to Establish a Cyanobacterium-Plant Symbiosis.</title>
        <authorList>
            <person name="Ekman M."/>
            <person name="Picossi S."/>
            <person name="Campbell E.L."/>
            <person name="Meeks J.C."/>
            <person name="Flores E."/>
        </authorList>
    </citation>
    <scope>NUCLEOTIDE SEQUENCE [LARGE SCALE GENOMIC DNA]</scope>
    <source>
        <strain>ATCC 29133 / PCC 73102</strain>
    </source>
</reference>
<keyword id="KW-1185">Reference proteome</keyword>
<keyword id="KW-0687">Ribonucleoprotein</keyword>
<keyword id="KW-0689">Ribosomal protein</keyword>
<gene>
    <name evidence="1" type="primary">rpmJ</name>
    <name type="ordered locus">Npun_R4369</name>
</gene>
<comment type="similarity">
    <text evidence="1">Belongs to the bacterial ribosomal protein bL36 family.</text>
</comment>
<dbReference type="EMBL" id="CP001037">
    <property type="protein sequence ID" value="ACC82742.1"/>
    <property type="molecule type" value="Genomic_DNA"/>
</dbReference>
<dbReference type="SMR" id="B2ITN4"/>
<dbReference type="STRING" id="63737.Npun_R4369"/>
<dbReference type="EnsemblBacteria" id="ACC82742">
    <property type="protein sequence ID" value="ACC82742"/>
    <property type="gene ID" value="Npun_R4369"/>
</dbReference>
<dbReference type="KEGG" id="npu:Npun_R4369"/>
<dbReference type="eggNOG" id="COG0257">
    <property type="taxonomic scope" value="Bacteria"/>
</dbReference>
<dbReference type="HOGENOM" id="CLU_135723_6_2_3"/>
<dbReference type="OrthoDB" id="9802520at2"/>
<dbReference type="PhylomeDB" id="B2ITN4"/>
<dbReference type="Proteomes" id="UP000001191">
    <property type="component" value="Chromosome"/>
</dbReference>
<dbReference type="GO" id="GO:0005737">
    <property type="term" value="C:cytoplasm"/>
    <property type="evidence" value="ECO:0007669"/>
    <property type="project" value="UniProtKB-ARBA"/>
</dbReference>
<dbReference type="GO" id="GO:1990904">
    <property type="term" value="C:ribonucleoprotein complex"/>
    <property type="evidence" value="ECO:0007669"/>
    <property type="project" value="UniProtKB-KW"/>
</dbReference>
<dbReference type="GO" id="GO:0005840">
    <property type="term" value="C:ribosome"/>
    <property type="evidence" value="ECO:0007669"/>
    <property type="project" value="UniProtKB-KW"/>
</dbReference>
<dbReference type="GO" id="GO:0003735">
    <property type="term" value="F:structural constituent of ribosome"/>
    <property type="evidence" value="ECO:0007669"/>
    <property type="project" value="InterPro"/>
</dbReference>
<dbReference type="GO" id="GO:0006412">
    <property type="term" value="P:translation"/>
    <property type="evidence" value="ECO:0007669"/>
    <property type="project" value="UniProtKB-UniRule"/>
</dbReference>
<dbReference type="HAMAP" id="MF_00251">
    <property type="entry name" value="Ribosomal_bL36"/>
    <property type="match status" value="1"/>
</dbReference>
<dbReference type="InterPro" id="IPR000473">
    <property type="entry name" value="Ribosomal_bL36"/>
</dbReference>
<dbReference type="InterPro" id="IPR035977">
    <property type="entry name" value="Ribosomal_bL36_sp"/>
</dbReference>
<dbReference type="NCBIfam" id="TIGR01022">
    <property type="entry name" value="rpmJ_bact"/>
    <property type="match status" value="1"/>
</dbReference>
<dbReference type="PANTHER" id="PTHR42888">
    <property type="entry name" value="50S RIBOSOMAL PROTEIN L36, CHLOROPLASTIC"/>
    <property type="match status" value="1"/>
</dbReference>
<dbReference type="PANTHER" id="PTHR42888:SF1">
    <property type="entry name" value="LARGE RIBOSOMAL SUBUNIT PROTEIN BL36C"/>
    <property type="match status" value="1"/>
</dbReference>
<dbReference type="Pfam" id="PF00444">
    <property type="entry name" value="Ribosomal_L36"/>
    <property type="match status" value="1"/>
</dbReference>
<dbReference type="SUPFAM" id="SSF57840">
    <property type="entry name" value="Ribosomal protein L36"/>
    <property type="match status" value="1"/>
</dbReference>
<dbReference type="PROSITE" id="PS00828">
    <property type="entry name" value="RIBOSOMAL_L36"/>
    <property type="match status" value="1"/>
</dbReference>
<protein>
    <recommendedName>
        <fullName evidence="1">Large ribosomal subunit protein bL36</fullName>
    </recommendedName>
    <alternativeName>
        <fullName evidence="2">50S ribosomal protein L36</fullName>
    </alternativeName>
</protein>